<dbReference type="EC" id="5.3.1.6" evidence="1"/>
<dbReference type="EMBL" id="CP000949">
    <property type="protein sequence ID" value="ACA70821.1"/>
    <property type="molecule type" value="Genomic_DNA"/>
</dbReference>
<dbReference type="SMR" id="B1J2A2"/>
<dbReference type="STRING" id="390235.PputW619_0315"/>
<dbReference type="KEGG" id="ppw:PputW619_0315"/>
<dbReference type="eggNOG" id="COG0120">
    <property type="taxonomic scope" value="Bacteria"/>
</dbReference>
<dbReference type="HOGENOM" id="CLU_056590_1_1_6"/>
<dbReference type="OrthoDB" id="5870696at2"/>
<dbReference type="UniPathway" id="UPA00115">
    <property type="reaction ID" value="UER00412"/>
</dbReference>
<dbReference type="GO" id="GO:0005829">
    <property type="term" value="C:cytosol"/>
    <property type="evidence" value="ECO:0007669"/>
    <property type="project" value="TreeGrafter"/>
</dbReference>
<dbReference type="GO" id="GO:0004751">
    <property type="term" value="F:ribose-5-phosphate isomerase activity"/>
    <property type="evidence" value="ECO:0007669"/>
    <property type="project" value="UniProtKB-UniRule"/>
</dbReference>
<dbReference type="GO" id="GO:0006014">
    <property type="term" value="P:D-ribose metabolic process"/>
    <property type="evidence" value="ECO:0007669"/>
    <property type="project" value="TreeGrafter"/>
</dbReference>
<dbReference type="GO" id="GO:0009052">
    <property type="term" value="P:pentose-phosphate shunt, non-oxidative branch"/>
    <property type="evidence" value="ECO:0007669"/>
    <property type="project" value="UniProtKB-UniRule"/>
</dbReference>
<dbReference type="CDD" id="cd01398">
    <property type="entry name" value="RPI_A"/>
    <property type="match status" value="1"/>
</dbReference>
<dbReference type="FunFam" id="3.30.70.260:FF:000004">
    <property type="entry name" value="Ribose-5-phosphate isomerase A"/>
    <property type="match status" value="1"/>
</dbReference>
<dbReference type="FunFam" id="3.40.50.1360:FF:000001">
    <property type="entry name" value="Ribose-5-phosphate isomerase A"/>
    <property type="match status" value="1"/>
</dbReference>
<dbReference type="Gene3D" id="3.30.70.260">
    <property type="match status" value="1"/>
</dbReference>
<dbReference type="Gene3D" id="3.40.50.1360">
    <property type="match status" value="1"/>
</dbReference>
<dbReference type="HAMAP" id="MF_00170">
    <property type="entry name" value="Rib_5P_isom_A"/>
    <property type="match status" value="1"/>
</dbReference>
<dbReference type="InterPro" id="IPR037171">
    <property type="entry name" value="NagB/RpiA_transferase-like"/>
</dbReference>
<dbReference type="InterPro" id="IPR020672">
    <property type="entry name" value="Ribose5P_isomerase_typA_subgr"/>
</dbReference>
<dbReference type="InterPro" id="IPR004788">
    <property type="entry name" value="Ribose5P_isomerase_type_A"/>
</dbReference>
<dbReference type="NCBIfam" id="NF001924">
    <property type="entry name" value="PRK00702.1"/>
    <property type="match status" value="1"/>
</dbReference>
<dbReference type="NCBIfam" id="TIGR00021">
    <property type="entry name" value="rpiA"/>
    <property type="match status" value="1"/>
</dbReference>
<dbReference type="PANTHER" id="PTHR11934">
    <property type="entry name" value="RIBOSE-5-PHOSPHATE ISOMERASE"/>
    <property type="match status" value="1"/>
</dbReference>
<dbReference type="PANTHER" id="PTHR11934:SF0">
    <property type="entry name" value="RIBOSE-5-PHOSPHATE ISOMERASE"/>
    <property type="match status" value="1"/>
</dbReference>
<dbReference type="Pfam" id="PF06026">
    <property type="entry name" value="Rib_5-P_isom_A"/>
    <property type="match status" value="1"/>
</dbReference>
<dbReference type="SUPFAM" id="SSF75445">
    <property type="entry name" value="D-ribose-5-phosphate isomerase (RpiA), lid domain"/>
    <property type="match status" value="1"/>
</dbReference>
<dbReference type="SUPFAM" id="SSF100950">
    <property type="entry name" value="NagB/RpiA/CoA transferase-like"/>
    <property type="match status" value="1"/>
</dbReference>
<name>RPIA_PSEPW</name>
<organism>
    <name type="scientific">Pseudomonas putida (strain W619)</name>
    <dbReference type="NCBI Taxonomy" id="390235"/>
    <lineage>
        <taxon>Bacteria</taxon>
        <taxon>Pseudomonadati</taxon>
        <taxon>Pseudomonadota</taxon>
        <taxon>Gammaproteobacteria</taxon>
        <taxon>Pseudomonadales</taxon>
        <taxon>Pseudomonadaceae</taxon>
        <taxon>Pseudomonas</taxon>
    </lineage>
</organism>
<protein>
    <recommendedName>
        <fullName evidence="1">Ribose-5-phosphate isomerase A</fullName>
        <ecNumber evidence="1">5.3.1.6</ecNumber>
    </recommendedName>
    <alternativeName>
        <fullName evidence="1">Phosphoriboisomerase A</fullName>
        <shortName evidence="1">PRI</shortName>
    </alternativeName>
</protein>
<keyword id="KW-0413">Isomerase</keyword>
<gene>
    <name evidence="1" type="primary">rpiA</name>
    <name type="ordered locus">PputW619_0315</name>
</gene>
<proteinExistence type="inferred from homology"/>
<sequence>MTQDQLKQAVAQAAVDFILPKLDEKSVVGVGTGSTANFFIDALAQHKTAFDGAVASSEATAQRLKGHGIPVYELNSVSELEFYVDGADESDAHLNLIKGGGAALTREKIVAAVAKTFICIADASKLVPVLGAFPLPVEVIPMARSHVARQLVKLGGDPVYREGVVTDNGNVILDVYNLQITNPVELEAQINAIVGVVTNGLFAARPADLLLLGTPEGVKSLKAE</sequence>
<feature type="chain" id="PRO_1000097684" description="Ribose-5-phosphate isomerase A">
    <location>
        <begin position="1"/>
        <end position="224"/>
    </location>
</feature>
<feature type="active site" description="Proton acceptor" evidence="1">
    <location>
        <position position="107"/>
    </location>
</feature>
<feature type="binding site" evidence="1">
    <location>
        <begin position="32"/>
        <end position="35"/>
    </location>
    <ligand>
        <name>substrate</name>
    </ligand>
</feature>
<feature type="binding site" evidence="1">
    <location>
        <begin position="85"/>
        <end position="88"/>
    </location>
    <ligand>
        <name>substrate</name>
    </ligand>
</feature>
<feature type="binding site" evidence="1">
    <location>
        <begin position="98"/>
        <end position="101"/>
    </location>
    <ligand>
        <name>substrate</name>
    </ligand>
</feature>
<feature type="binding site" evidence="1">
    <location>
        <position position="125"/>
    </location>
    <ligand>
        <name>substrate</name>
    </ligand>
</feature>
<comment type="function">
    <text evidence="1">Catalyzes the reversible conversion of ribose-5-phosphate to ribulose 5-phosphate.</text>
</comment>
<comment type="catalytic activity">
    <reaction evidence="1">
        <text>aldehydo-D-ribose 5-phosphate = D-ribulose 5-phosphate</text>
        <dbReference type="Rhea" id="RHEA:14657"/>
        <dbReference type="ChEBI" id="CHEBI:58121"/>
        <dbReference type="ChEBI" id="CHEBI:58273"/>
        <dbReference type="EC" id="5.3.1.6"/>
    </reaction>
</comment>
<comment type="pathway">
    <text evidence="1">Carbohydrate degradation; pentose phosphate pathway; D-ribose 5-phosphate from D-ribulose 5-phosphate (non-oxidative stage): step 1/1.</text>
</comment>
<comment type="subunit">
    <text evidence="1">Homodimer.</text>
</comment>
<comment type="similarity">
    <text evidence="1">Belongs to the ribose 5-phosphate isomerase family.</text>
</comment>
<evidence type="ECO:0000255" key="1">
    <source>
        <dbReference type="HAMAP-Rule" id="MF_00170"/>
    </source>
</evidence>
<reference key="1">
    <citation type="submission" date="2008-02" db="EMBL/GenBank/DDBJ databases">
        <title>Complete sequence of Pseudomonas putida W619.</title>
        <authorList>
            <person name="Copeland A."/>
            <person name="Lucas S."/>
            <person name="Lapidus A."/>
            <person name="Barry K."/>
            <person name="Detter J.C."/>
            <person name="Glavina del Rio T."/>
            <person name="Dalin E."/>
            <person name="Tice H."/>
            <person name="Pitluck S."/>
            <person name="Chain P."/>
            <person name="Malfatti S."/>
            <person name="Shin M."/>
            <person name="Vergez L."/>
            <person name="Schmutz J."/>
            <person name="Larimer F."/>
            <person name="Land M."/>
            <person name="Hauser L."/>
            <person name="Kyrpides N."/>
            <person name="Kim E."/>
            <person name="Taghavi S."/>
            <person name="Vangronsveld D."/>
            <person name="van der Lelie D."/>
            <person name="Richardson P."/>
        </authorList>
    </citation>
    <scope>NUCLEOTIDE SEQUENCE [LARGE SCALE GENOMIC DNA]</scope>
    <source>
        <strain>W619</strain>
    </source>
</reference>
<accession>B1J2A2</accession>